<comment type="function">
    <text evidence="1">May play a key role in the regulation of the intracellular concentration of adenosylhomocysteine.</text>
</comment>
<comment type="catalytic activity">
    <reaction evidence="1">
        <text>S-adenosyl-L-homocysteine + H2O = L-homocysteine + adenosine</text>
        <dbReference type="Rhea" id="RHEA:21708"/>
        <dbReference type="ChEBI" id="CHEBI:15377"/>
        <dbReference type="ChEBI" id="CHEBI:16335"/>
        <dbReference type="ChEBI" id="CHEBI:57856"/>
        <dbReference type="ChEBI" id="CHEBI:58199"/>
        <dbReference type="EC" id="3.13.2.1"/>
    </reaction>
</comment>
<comment type="cofactor">
    <cofactor evidence="1">
        <name>NAD(+)</name>
        <dbReference type="ChEBI" id="CHEBI:57540"/>
    </cofactor>
    <text evidence="1">Binds 1 NAD(+) per subunit.</text>
</comment>
<comment type="pathway">
    <text evidence="1">Amino-acid biosynthesis; L-homocysteine biosynthesis; L-homocysteine from S-adenosyl-L-homocysteine: step 1/1.</text>
</comment>
<comment type="subcellular location">
    <subcellularLocation>
        <location evidence="1">Cytoplasm</location>
    </subcellularLocation>
</comment>
<comment type="similarity">
    <text evidence="1">Belongs to the adenosylhomocysteinase family.</text>
</comment>
<keyword id="KW-0963">Cytoplasm</keyword>
<keyword id="KW-0378">Hydrolase</keyword>
<keyword id="KW-0520">NAD</keyword>
<keyword id="KW-0554">One-carbon metabolism</keyword>
<proteinExistence type="inferred from homology"/>
<reference key="1">
    <citation type="journal article" date="2004" name="Proc. Natl. Acad. Sci. U.S.A.">
        <title>The louse-borne human pathogen Bartonella quintana is a genomic derivative of the zoonotic agent Bartonella henselae.</title>
        <authorList>
            <person name="Alsmark U.C.M."/>
            <person name="Frank A.C."/>
            <person name="Karlberg E.O."/>
            <person name="Legault B.-A."/>
            <person name="Ardell D.H."/>
            <person name="Canbaeck B."/>
            <person name="Eriksson A.-S."/>
            <person name="Naeslund A.K."/>
            <person name="Handley S.A."/>
            <person name="Huvet M."/>
            <person name="La Scola B."/>
            <person name="Holmberg M."/>
            <person name="Andersson S.G.E."/>
        </authorList>
    </citation>
    <scope>NUCLEOTIDE SEQUENCE [LARGE SCALE GENOMIC DNA]</scope>
    <source>
        <strain>Toulouse</strain>
    </source>
</reference>
<evidence type="ECO:0000255" key="1">
    <source>
        <dbReference type="HAMAP-Rule" id="MF_00563"/>
    </source>
</evidence>
<name>SAHH_BARQU</name>
<protein>
    <recommendedName>
        <fullName evidence="1">Adenosylhomocysteinase</fullName>
        <ecNumber evidence="1">3.13.2.1</ecNumber>
    </recommendedName>
    <alternativeName>
        <fullName evidence="1">S-adenosyl-L-homocysteine hydrolase</fullName>
        <shortName evidence="1">AdoHcyase</shortName>
    </alternativeName>
</protein>
<feature type="chain" id="PRO_0000116945" description="Adenosylhomocysteinase">
    <location>
        <begin position="1"/>
        <end position="465"/>
    </location>
</feature>
<feature type="binding site" evidence="1">
    <location>
        <position position="56"/>
    </location>
    <ligand>
        <name>substrate</name>
    </ligand>
</feature>
<feature type="binding site" evidence="1">
    <location>
        <position position="131"/>
    </location>
    <ligand>
        <name>substrate</name>
    </ligand>
</feature>
<feature type="binding site" evidence="1">
    <location>
        <position position="191"/>
    </location>
    <ligand>
        <name>substrate</name>
    </ligand>
</feature>
<feature type="binding site" evidence="1">
    <location>
        <begin position="192"/>
        <end position="194"/>
    </location>
    <ligand>
        <name>NAD(+)</name>
        <dbReference type="ChEBI" id="CHEBI:57540"/>
    </ligand>
</feature>
<feature type="binding site" evidence="1">
    <location>
        <position position="221"/>
    </location>
    <ligand>
        <name>substrate</name>
    </ligand>
</feature>
<feature type="binding site" evidence="1">
    <location>
        <position position="225"/>
    </location>
    <ligand>
        <name>substrate</name>
    </ligand>
</feature>
<feature type="binding site" evidence="1">
    <location>
        <position position="226"/>
    </location>
    <ligand>
        <name>NAD(+)</name>
        <dbReference type="ChEBI" id="CHEBI:57540"/>
    </ligand>
</feature>
<feature type="binding site" evidence="1">
    <location>
        <begin position="255"/>
        <end position="260"/>
    </location>
    <ligand>
        <name>NAD(+)</name>
        <dbReference type="ChEBI" id="CHEBI:57540"/>
    </ligand>
</feature>
<feature type="binding site" evidence="1">
    <location>
        <position position="278"/>
    </location>
    <ligand>
        <name>NAD(+)</name>
        <dbReference type="ChEBI" id="CHEBI:57540"/>
    </ligand>
</feature>
<feature type="binding site" evidence="1">
    <location>
        <position position="313"/>
    </location>
    <ligand>
        <name>NAD(+)</name>
        <dbReference type="ChEBI" id="CHEBI:57540"/>
    </ligand>
</feature>
<feature type="binding site" evidence="1">
    <location>
        <begin position="334"/>
        <end position="336"/>
    </location>
    <ligand>
        <name>NAD(+)</name>
        <dbReference type="ChEBI" id="CHEBI:57540"/>
    </ligand>
</feature>
<feature type="binding site" evidence="1">
    <location>
        <position position="379"/>
    </location>
    <ligand>
        <name>NAD(+)</name>
        <dbReference type="ChEBI" id="CHEBI:57540"/>
    </ligand>
</feature>
<organism>
    <name type="scientific">Bartonella quintana (strain Toulouse)</name>
    <name type="common">Rochalimaea quintana</name>
    <dbReference type="NCBI Taxonomy" id="283165"/>
    <lineage>
        <taxon>Bacteria</taxon>
        <taxon>Pseudomonadati</taxon>
        <taxon>Pseudomonadota</taxon>
        <taxon>Alphaproteobacteria</taxon>
        <taxon>Hyphomicrobiales</taxon>
        <taxon>Bartonellaceae</taxon>
        <taxon>Bartonella</taxon>
    </lineage>
</organism>
<sequence length="465" mass="51047">MAAQDYVVKDIALAAYGRKEIDIAETEMPGLMACREEFSFSQPLRGARISGSLHITIQTAVLIETLKAIGADVRWSSSNIFSTQDHAAAAIAATGTAVFGVKGETLEEYWAYIDAIFQWPDGNPSNLILDDGADATNYILTGSRAEVNKDILSYPKTKEEEFFFKQIQKRMKITPGFFTRQRTAIKGVSEETTTGVLRLYQLQKEGLLPFPAINVNDSVTKSKFDNKYGCKESLVDGIRRGTDVMIAGKTAIVCGYGNVGKGSAASLSGAGARVKITEIDPICALQAAMDGYEVVTLDDAASSADIIITTTGNKDVVRLDHMRQVKDMCILGNIGHFDNEIQVSALRNLPWTNIKPQVDIVTFPDGKRIILLSEGRLLNLGNATGHPSFVMSASFTNQVLAQIELFTRAEHYKNEVTVLPKRLDEKVARLHLDRLGVKLSVLSEEQAVYIGVTPQGPYKPNHYRY</sequence>
<dbReference type="EC" id="3.13.2.1" evidence="1"/>
<dbReference type="EMBL" id="BX897700">
    <property type="protein sequence ID" value="CAF25536.1"/>
    <property type="molecule type" value="Genomic_DNA"/>
</dbReference>
<dbReference type="RefSeq" id="WP_011178865.1">
    <property type="nucleotide sequence ID" value="NC_005955.1"/>
</dbReference>
<dbReference type="SMR" id="Q6G1D6"/>
<dbReference type="KEGG" id="bqu:BQ00290"/>
<dbReference type="eggNOG" id="COG0499">
    <property type="taxonomic scope" value="Bacteria"/>
</dbReference>
<dbReference type="HOGENOM" id="CLU_025194_2_1_5"/>
<dbReference type="OrthoDB" id="9802717at2"/>
<dbReference type="UniPathway" id="UPA00314">
    <property type="reaction ID" value="UER00076"/>
</dbReference>
<dbReference type="Proteomes" id="UP000000597">
    <property type="component" value="Chromosome"/>
</dbReference>
<dbReference type="GO" id="GO:0005829">
    <property type="term" value="C:cytosol"/>
    <property type="evidence" value="ECO:0007669"/>
    <property type="project" value="TreeGrafter"/>
</dbReference>
<dbReference type="GO" id="GO:0004013">
    <property type="term" value="F:adenosylhomocysteinase activity"/>
    <property type="evidence" value="ECO:0007669"/>
    <property type="project" value="UniProtKB-UniRule"/>
</dbReference>
<dbReference type="GO" id="GO:0071269">
    <property type="term" value="P:L-homocysteine biosynthetic process"/>
    <property type="evidence" value="ECO:0007669"/>
    <property type="project" value="UniProtKB-UniRule"/>
</dbReference>
<dbReference type="GO" id="GO:0006730">
    <property type="term" value="P:one-carbon metabolic process"/>
    <property type="evidence" value="ECO:0007669"/>
    <property type="project" value="UniProtKB-KW"/>
</dbReference>
<dbReference type="GO" id="GO:0033353">
    <property type="term" value="P:S-adenosylmethionine cycle"/>
    <property type="evidence" value="ECO:0007669"/>
    <property type="project" value="TreeGrafter"/>
</dbReference>
<dbReference type="CDD" id="cd00401">
    <property type="entry name" value="SAHH"/>
    <property type="match status" value="1"/>
</dbReference>
<dbReference type="FunFam" id="3.40.50.720:FF:000004">
    <property type="entry name" value="Adenosylhomocysteinase"/>
    <property type="match status" value="1"/>
</dbReference>
<dbReference type="Gene3D" id="3.40.50.1480">
    <property type="entry name" value="Adenosylhomocysteinase-like"/>
    <property type="match status" value="1"/>
</dbReference>
<dbReference type="Gene3D" id="3.40.50.720">
    <property type="entry name" value="NAD(P)-binding Rossmann-like Domain"/>
    <property type="match status" value="1"/>
</dbReference>
<dbReference type="HAMAP" id="MF_00563">
    <property type="entry name" value="AdoHcyase"/>
    <property type="match status" value="1"/>
</dbReference>
<dbReference type="InterPro" id="IPR042172">
    <property type="entry name" value="Adenosylhomocyst_ase-like_sf"/>
</dbReference>
<dbReference type="InterPro" id="IPR000043">
    <property type="entry name" value="Adenosylhomocysteinase-like"/>
</dbReference>
<dbReference type="InterPro" id="IPR015878">
    <property type="entry name" value="Ado_hCys_hydrolase_NAD-bd"/>
</dbReference>
<dbReference type="InterPro" id="IPR036291">
    <property type="entry name" value="NAD(P)-bd_dom_sf"/>
</dbReference>
<dbReference type="InterPro" id="IPR020082">
    <property type="entry name" value="S-Ado-L-homoCys_hydrolase_CS"/>
</dbReference>
<dbReference type="NCBIfam" id="TIGR00936">
    <property type="entry name" value="ahcY"/>
    <property type="match status" value="1"/>
</dbReference>
<dbReference type="NCBIfam" id="NF004005">
    <property type="entry name" value="PRK05476.2-3"/>
    <property type="match status" value="1"/>
</dbReference>
<dbReference type="PANTHER" id="PTHR23420">
    <property type="entry name" value="ADENOSYLHOMOCYSTEINASE"/>
    <property type="match status" value="1"/>
</dbReference>
<dbReference type="PANTHER" id="PTHR23420:SF0">
    <property type="entry name" value="ADENOSYLHOMOCYSTEINASE"/>
    <property type="match status" value="1"/>
</dbReference>
<dbReference type="Pfam" id="PF05221">
    <property type="entry name" value="AdoHcyase"/>
    <property type="match status" value="1"/>
</dbReference>
<dbReference type="Pfam" id="PF00670">
    <property type="entry name" value="AdoHcyase_NAD"/>
    <property type="match status" value="1"/>
</dbReference>
<dbReference type="PIRSF" id="PIRSF001109">
    <property type="entry name" value="Ad_hcy_hydrolase"/>
    <property type="match status" value="1"/>
</dbReference>
<dbReference type="SMART" id="SM00996">
    <property type="entry name" value="AdoHcyase"/>
    <property type="match status" value="1"/>
</dbReference>
<dbReference type="SMART" id="SM00997">
    <property type="entry name" value="AdoHcyase_NAD"/>
    <property type="match status" value="1"/>
</dbReference>
<dbReference type="SUPFAM" id="SSF52283">
    <property type="entry name" value="Formate/glycerate dehydrogenase catalytic domain-like"/>
    <property type="match status" value="1"/>
</dbReference>
<dbReference type="SUPFAM" id="SSF51735">
    <property type="entry name" value="NAD(P)-binding Rossmann-fold domains"/>
    <property type="match status" value="1"/>
</dbReference>
<dbReference type="PROSITE" id="PS00738">
    <property type="entry name" value="ADOHCYASE_1"/>
    <property type="match status" value="1"/>
</dbReference>
<dbReference type="PROSITE" id="PS00739">
    <property type="entry name" value="ADOHCYASE_2"/>
    <property type="match status" value="1"/>
</dbReference>
<accession>Q6G1D6</accession>
<gene>
    <name evidence="1" type="primary">ahcY</name>
    <name type="ordered locus">BQ00290</name>
</gene>